<reference key="1">
    <citation type="journal article" date="2008" name="Genomics">
        <title>Evolution in the laboratory: the genome of Halobacterium salinarum strain R1 compared to that of strain NRC-1.</title>
        <authorList>
            <person name="Pfeiffer F."/>
            <person name="Schuster S.C."/>
            <person name="Broicher A."/>
            <person name="Falb M."/>
            <person name="Palm P."/>
            <person name="Rodewald K."/>
            <person name="Ruepp A."/>
            <person name="Soppa J."/>
            <person name="Tittor J."/>
            <person name="Oesterhelt D."/>
        </authorList>
    </citation>
    <scope>NUCLEOTIDE SEQUENCE [LARGE SCALE GENOMIC DNA]</scope>
    <source>
        <strain>ATCC 29341 / DSM 671 / R1</strain>
    </source>
</reference>
<feature type="chain" id="PRO_1000089085" description="Argininosuccinate lyase">
    <location>
        <begin position="1"/>
        <end position="485"/>
    </location>
</feature>
<protein>
    <recommendedName>
        <fullName evidence="1">Argininosuccinate lyase</fullName>
        <shortName evidence="1">ASAL</shortName>
        <ecNumber evidence="1">4.3.2.1</ecNumber>
    </recommendedName>
    <alternativeName>
        <fullName evidence="1">Arginosuccinase</fullName>
    </alternativeName>
</protein>
<keyword id="KW-0028">Amino-acid biosynthesis</keyword>
<keyword id="KW-0055">Arginine biosynthesis</keyword>
<keyword id="KW-0963">Cytoplasm</keyword>
<keyword id="KW-0456">Lyase</keyword>
<comment type="catalytic activity">
    <reaction evidence="1">
        <text>2-(N(omega)-L-arginino)succinate = fumarate + L-arginine</text>
        <dbReference type="Rhea" id="RHEA:24020"/>
        <dbReference type="ChEBI" id="CHEBI:29806"/>
        <dbReference type="ChEBI" id="CHEBI:32682"/>
        <dbReference type="ChEBI" id="CHEBI:57472"/>
        <dbReference type="EC" id="4.3.2.1"/>
    </reaction>
</comment>
<comment type="pathway">
    <text evidence="1">Amino-acid biosynthesis; L-arginine biosynthesis; L-arginine from L-ornithine and carbamoyl phosphate: step 3/3.</text>
</comment>
<comment type="subcellular location">
    <subcellularLocation>
        <location evidence="1">Cytoplasm</location>
    </subcellularLocation>
</comment>
<comment type="similarity">
    <text evidence="1">Belongs to the lyase 1 family. Argininosuccinate lyase subfamily.</text>
</comment>
<accession>B0R7V5</accession>
<dbReference type="EC" id="4.3.2.1" evidence="1"/>
<dbReference type="EMBL" id="AM774415">
    <property type="protein sequence ID" value="CAP14824.1"/>
    <property type="molecule type" value="Genomic_DNA"/>
</dbReference>
<dbReference type="RefSeq" id="WP_010903820.1">
    <property type="nucleotide sequence ID" value="NC_010364.1"/>
</dbReference>
<dbReference type="SMR" id="B0R7V5"/>
<dbReference type="EnsemblBacteria" id="CAP14824">
    <property type="protein sequence ID" value="CAP14824"/>
    <property type="gene ID" value="OE_4419R"/>
</dbReference>
<dbReference type="GeneID" id="68694955"/>
<dbReference type="KEGG" id="hsl:OE_4419R"/>
<dbReference type="HOGENOM" id="CLU_027272_2_3_2"/>
<dbReference type="PhylomeDB" id="B0R7V5"/>
<dbReference type="UniPathway" id="UPA00068">
    <property type="reaction ID" value="UER00114"/>
</dbReference>
<dbReference type="Proteomes" id="UP000001321">
    <property type="component" value="Chromosome"/>
</dbReference>
<dbReference type="GO" id="GO:0005829">
    <property type="term" value="C:cytosol"/>
    <property type="evidence" value="ECO:0007669"/>
    <property type="project" value="TreeGrafter"/>
</dbReference>
<dbReference type="GO" id="GO:0004056">
    <property type="term" value="F:argininosuccinate lyase activity"/>
    <property type="evidence" value="ECO:0007669"/>
    <property type="project" value="UniProtKB-UniRule"/>
</dbReference>
<dbReference type="GO" id="GO:0042450">
    <property type="term" value="P:arginine biosynthetic process via ornithine"/>
    <property type="evidence" value="ECO:0007669"/>
    <property type="project" value="InterPro"/>
</dbReference>
<dbReference type="GO" id="GO:0006526">
    <property type="term" value="P:L-arginine biosynthetic process"/>
    <property type="evidence" value="ECO:0007669"/>
    <property type="project" value="UniProtKB-UniRule"/>
</dbReference>
<dbReference type="CDD" id="cd01359">
    <property type="entry name" value="Argininosuccinate_lyase"/>
    <property type="match status" value="1"/>
</dbReference>
<dbReference type="Gene3D" id="1.10.40.30">
    <property type="entry name" value="Fumarase/aspartase (C-terminal domain)"/>
    <property type="match status" value="1"/>
</dbReference>
<dbReference type="Gene3D" id="1.20.200.10">
    <property type="entry name" value="Fumarase/aspartase (Central domain)"/>
    <property type="match status" value="1"/>
</dbReference>
<dbReference type="Gene3D" id="1.10.275.10">
    <property type="entry name" value="Fumarase/aspartase (N-terminal domain)"/>
    <property type="match status" value="1"/>
</dbReference>
<dbReference type="HAMAP" id="MF_00006">
    <property type="entry name" value="Arg_succ_lyase"/>
    <property type="match status" value="1"/>
</dbReference>
<dbReference type="InterPro" id="IPR029419">
    <property type="entry name" value="Arg_succ_lyase_C"/>
</dbReference>
<dbReference type="InterPro" id="IPR009049">
    <property type="entry name" value="Argininosuccinate_lyase"/>
</dbReference>
<dbReference type="InterPro" id="IPR024083">
    <property type="entry name" value="Fumarase/histidase_N"/>
</dbReference>
<dbReference type="InterPro" id="IPR000362">
    <property type="entry name" value="Fumarate_lyase_fam"/>
</dbReference>
<dbReference type="InterPro" id="IPR022761">
    <property type="entry name" value="Fumarate_lyase_N"/>
</dbReference>
<dbReference type="InterPro" id="IPR008948">
    <property type="entry name" value="L-Aspartase-like"/>
</dbReference>
<dbReference type="NCBIfam" id="TIGR00838">
    <property type="entry name" value="argH"/>
    <property type="match status" value="1"/>
</dbReference>
<dbReference type="PANTHER" id="PTHR43814">
    <property type="entry name" value="ARGININOSUCCINATE LYASE"/>
    <property type="match status" value="1"/>
</dbReference>
<dbReference type="PANTHER" id="PTHR43814:SF1">
    <property type="entry name" value="ARGININOSUCCINATE LYASE"/>
    <property type="match status" value="1"/>
</dbReference>
<dbReference type="Pfam" id="PF14698">
    <property type="entry name" value="ASL_C2"/>
    <property type="match status" value="1"/>
</dbReference>
<dbReference type="Pfam" id="PF00206">
    <property type="entry name" value="Lyase_1"/>
    <property type="match status" value="1"/>
</dbReference>
<dbReference type="PRINTS" id="PR00145">
    <property type="entry name" value="ARGSUCLYASE"/>
</dbReference>
<dbReference type="PRINTS" id="PR00149">
    <property type="entry name" value="FUMRATELYASE"/>
</dbReference>
<dbReference type="SUPFAM" id="SSF48557">
    <property type="entry name" value="L-aspartase-like"/>
    <property type="match status" value="1"/>
</dbReference>
<gene>
    <name evidence="1" type="primary">argH</name>
    <name type="ordered locus">OE_4419R</name>
</gene>
<name>ARLY_HALS3</name>
<evidence type="ECO:0000255" key="1">
    <source>
        <dbReference type="HAMAP-Rule" id="MF_00006"/>
    </source>
</evidence>
<proteinExistence type="inferred from homology"/>
<sequence length="485" mass="48792">MTGGGDPVVRRDRFSGGPARSFLSSMDGDGRIFEADLAVDRAHVVMLAEQDVIGDEAAAAILGALADVEAAGFDALPPGEDVHEAIETAVVEAVGRDGGKLHTARSRNDEVAACIRYRLRADLLDAIEVVVALRSALADVAAAEAETVMPGFTHLQPAQPTTVAHWALSYAGTLARDTGRLCDAYGRTNESPLGAAAFAGTTFGVDRERTAALLGFDGVVANAADAAASRDFLLEAVSALASVAVTCSGLAADVVFFANRGFVEVSDDYASTSSIMPQKKNPDTMELVRATAGDAVGAQQALATTLQGLPRAYNRDLQRATGHAWTAVDGVTSAVEVAAGVVATAGWPADDLEAAAGEGFSTATGVADALAAGGLPFRTAHEVVALAAERGCEGATLDAVAAATEAVTGEPLSAVVEPAAVADALDPVGSVAARDSAGGPAPAAVEAAVADVRDGIDADEAALAAERASLADAADALAAEVSGYV</sequence>
<organism>
    <name type="scientific">Halobacterium salinarum (strain ATCC 29341 / DSM 671 / R1)</name>
    <dbReference type="NCBI Taxonomy" id="478009"/>
    <lineage>
        <taxon>Archaea</taxon>
        <taxon>Methanobacteriati</taxon>
        <taxon>Methanobacteriota</taxon>
        <taxon>Stenosarchaea group</taxon>
        <taxon>Halobacteria</taxon>
        <taxon>Halobacteriales</taxon>
        <taxon>Halobacteriaceae</taxon>
        <taxon>Halobacterium</taxon>
        <taxon>Halobacterium salinarum NRC-34001</taxon>
    </lineage>
</organism>